<comment type="function">
    <text evidence="1">Participates actively in the response to hyperosmotic and heat shock by preventing the aggregation of stress-denatured proteins and by disaggregating proteins, also in an autonomous, DnaK-independent fashion. Unfolded proteins bind initially to DnaJ; upon interaction with the DnaJ-bound protein, DnaK hydrolyzes its bound ATP, resulting in the formation of a stable complex. GrpE releases ADP from DnaK; ATP binding to DnaK triggers the release of the substrate protein, thus completing the reaction cycle. Several rounds of ATP-dependent interactions between DnaJ, DnaK and GrpE are required for fully efficient folding. Also involved, together with DnaK and GrpE, in the DNA replication of plasmids through activation of initiation proteins.</text>
</comment>
<comment type="cofactor">
    <cofactor evidence="1">
        <name>Zn(2+)</name>
        <dbReference type="ChEBI" id="CHEBI:29105"/>
    </cofactor>
    <text evidence="1">Binds 2 Zn(2+) ions per monomer.</text>
</comment>
<comment type="subunit">
    <text evidence="1">Homodimer.</text>
</comment>
<comment type="subcellular location">
    <subcellularLocation>
        <location evidence="1">Cytoplasm</location>
    </subcellularLocation>
</comment>
<comment type="domain">
    <text evidence="1">The J domain is necessary and sufficient to stimulate DnaK ATPase activity. Zinc center 1 plays an important role in the autonomous, DnaK-independent chaperone activity of DnaJ. Zinc center 2 is essential for interaction with DnaK and for DnaJ activity.</text>
</comment>
<comment type="similarity">
    <text evidence="1">Belongs to the DnaJ family.</text>
</comment>
<gene>
    <name evidence="1" type="primary">dnaJ</name>
    <name type="ordered locus">CF0680</name>
</gene>
<evidence type="ECO:0000255" key="1">
    <source>
        <dbReference type="HAMAP-Rule" id="MF_01152"/>
    </source>
</evidence>
<feature type="chain" id="PRO_1000085173" description="Chaperone protein DnaJ">
    <location>
        <begin position="1"/>
        <end position="391"/>
    </location>
</feature>
<feature type="domain" description="J" evidence="1">
    <location>
        <begin position="2"/>
        <end position="67"/>
    </location>
</feature>
<feature type="repeat" description="CXXCXGXG motif">
    <location>
        <begin position="161"/>
        <end position="168"/>
    </location>
</feature>
<feature type="repeat" description="CXXCXGXG motif">
    <location>
        <begin position="178"/>
        <end position="185"/>
    </location>
</feature>
<feature type="repeat" description="CXXCXGXG motif">
    <location>
        <begin position="200"/>
        <end position="207"/>
    </location>
</feature>
<feature type="repeat" description="CXXCXGXG motif">
    <location>
        <begin position="214"/>
        <end position="221"/>
    </location>
</feature>
<feature type="zinc finger region" description="CR-type" evidence="1">
    <location>
        <begin position="148"/>
        <end position="226"/>
    </location>
</feature>
<feature type="binding site" evidence="1">
    <location>
        <position position="161"/>
    </location>
    <ligand>
        <name>Zn(2+)</name>
        <dbReference type="ChEBI" id="CHEBI:29105"/>
        <label>1</label>
    </ligand>
</feature>
<feature type="binding site" evidence="1">
    <location>
        <position position="164"/>
    </location>
    <ligand>
        <name>Zn(2+)</name>
        <dbReference type="ChEBI" id="CHEBI:29105"/>
        <label>1</label>
    </ligand>
</feature>
<feature type="binding site" evidence="1">
    <location>
        <position position="178"/>
    </location>
    <ligand>
        <name>Zn(2+)</name>
        <dbReference type="ChEBI" id="CHEBI:29105"/>
        <label>2</label>
    </ligand>
</feature>
<feature type="binding site" evidence="1">
    <location>
        <position position="181"/>
    </location>
    <ligand>
        <name>Zn(2+)</name>
        <dbReference type="ChEBI" id="CHEBI:29105"/>
        <label>2</label>
    </ligand>
</feature>
<feature type="binding site" evidence="1">
    <location>
        <position position="200"/>
    </location>
    <ligand>
        <name>Zn(2+)</name>
        <dbReference type="ChEBI" id="CHEBI:29105"/>
        <label>2</label>
    </ligand>
</feature>
<feature type="binding site" evidence="1">
    <location>
        <position position="203"/>
    </location>
    <ligand>
        <name>Zn(2+)</name>
        <dbReference type="ChEBI" id="CHEBI:29105"/>
        <label>2</label>
    </ligand>
</feature>
<feature type="binding site" evidence="1">
    <location>
        <position position="214"/>
    </location>
    <ligand>
        <name>Zn(2+)</name>
        <dbReference type="ChEBI" id="CHEBI:29105"/>
        <label>1</label>
    </ligand>
</feature>
<feature type="binding site" evidence="1">
    <location>
        <position position="217"/>
    </location>
    <ligand>
        <name>Zn(2+)</name>
        <dbReference type="ChEBI" id="CHEBI:29105"/>
        <label>1</label>
    </ligand>
</feature>
<protein>
    <recommendedName>
        <fullName evidence="1">Chaperone protein DnaJ</fullName>
    </recommendedName>
</protein>
<dbReference type="EMBL" id="AP006861">
    <property type="protein sequence ID" value="BAE81452.1"/>
    <property type="molecule type" value="Genomic_DNA"/>
</dbReference>
<dbReference type="RefSeq" id="WP_011458231.1">
    <property type="nucleotide sequence ID" value="NC_007899.1"/>
</dbReference>
<dbReference type="SMR" id="Q253T6"/>
<dbReference type="STRING" id="264202.CF0680"/>
<dbReference type="KEGG" id="cfe:CF0680"/>
<dbReference type="eggNOG" id="COG0484">
    <property type="taxonomic scope" value="Bacteria"/>
</dbReference>
<dbReference type="HOGENOM" id="CLU_017633_0_7_0"/>
<dbReference type="OrthoDB" id="9779889at2"/>
<dbReference type="Proteomes" id="UP000001260">
    <property type="component" value="Chromosome"/>
</dbReference>
<dbReference type="GO" id="GO:0005737">
    <property type="term" value="C:cytoplasm"/>
    <property type="evidence" value="ECO:0007669"/>
    <property type="project" value="UniProtKB-SubCell"/>
</dbReference>
<dbReference type="GO" id="GO:0005524">
    <property type="term" value="F:ATP binding"/>
    <property type="evidence" value="ECO:0007669"/>
    <property type="project" value="InterPro"/>
</dbReference>
<dbReference type="GO" id="GO:0031072">
    <property type="term" value="F:heat shock protein binding"/>
    <property type="evidence" value="ECO:0007669"/>
    <property type="project" value="InterPro"/>
</dbReference>
<dbReference type="GO" id="GO:0051082">
    <property type="term" value="F:unfolded protein binding"/>
    <property type="evidence" value="ECO:0007669"/>
    <property type="project" value="UniProtKB-UniRule"/>
</dbReference>
<dbReference type="GO" id="GO:0008270">
    <property type="term" value="F:zinc ion binding"/>
    <property type="evidence" value="ECO:0007669"/>
    <property type="project" value="UniProtKB-UniRule"/>
</dbReference>
<dbReference type="GO" id="GO:0051085">
    <property type="term" value="P:chaperone cofactor-dependent protein refolding"/>
    <property type="evidence" value="ECO:0007669"/>
    <property type="project" value="TreeGrafter"/>
</dbReference>
<dbReference type="GO" id="GO:0006260">
    <property type="term" value="P:DNA replication"/>
    <property type="evidence" value="ECO:0007669"/>
    <property type="project" value="UniProtKB-KW"/>
</dbReference>
<dbReference type="GO" id="GO:0042026">
    <property type="term" value="P:protein refolding"/>
    <property type="evidence" value="ECO:0007669"/>
    <property type="project" value="TreeGrafter"/>
</dbReference>
<dbReference type="GO" id="GO:0009408">
    <property type="term" value="P:response to heat"/>
    <property type="evidence" value="ECO:0007669"/>
    <property type="project" value="InterPro"/>
</dbReference>
<dbReference type="CDD" id="cd06257">
    <property type="entry name" value="DnaJ"/>
    <property type="match status" value="1"/>
</dbReference>
<dbReference type="CDD" id="cd10747">
    <property type="entry name" value="DnaJ_C"/>
    <property type="match status" value="1"/>
</dbReference>
<dbReference type="CDD" id="cd10719">
    <property type="entry name" value="DnaJ_zf"/>
    <property type="match status" value="1"/>
</dbReference>
<dbReference type="FunFam" id="1.10.287.110:FF:000034">
    <property type="entry name" value="Chaperone protein DnaJ"/>
    <property type="match status" value="1"/>
</dbReference>
<dbReference type="FunFam" id="2.60.260.20:FF:000005">
    <property type="entry name" value="Chaperone protein dnaJ 1, mitochondrial"/>
    <property type="match status" value="1"/>
</dbReference>
<dbReference type="FunFam" id="2.10.230.10:FF:000002">
    <property type="entry name" value="Molecular chaperone DnaJ"/>
    <property type="match status" value="1"/>
</dbReference>
<dbReference type="Gene3D" id="1.10.287.110">
    <property type="entry name" value="DnaJ domain"/>
    <property type="match status" value="1"/>
</dbReference>
<dbReference type="Gene3D" id="2.10.230.10">
    <property type="entry name" value="Heat shock protein DnaJ, cysteine-rich domain"/>
    <property type="match status" value="1"/>
</dbReference>
<dbReference type="Gene3D" id="2.60.260.20">
    <property type="entry name" value="Urease metallochaperone UreE, N-terminal domain"/>
    <property type="match status" value="2"/>
</dbReference>
<dbReference type="HAMAP" id="MF_01152">
    <property type="entry name" value="DnaJ"/>
    <property type="match status" value="1"/>
</dbReference>
<dbReference type="InterPro" id="IPR012724">
    <property type="entry name" value="DnaJ"/>
</dbReference>
<dbReference type="InterPro" id="IPR002939">
    <property type="entry name" value="DnaJ_C"/>
</dbReference>
<dbReference type="InterPro" id="IPR001623">
    <property type="entry name" value="DnaJ_domain"/>
</dbReference>
<dbReference type="InterPro" id="IPR018253">
    <property type="entry name" value="DnaJ_domain_CS"/>
</dbReference>
<dbReference type="InterPro" id="IPR008971">
    <property type="entry name" value="HSP40/DnaJ_pept-bd"/>
</dbReference>
<dbReference type="InterPro" id="IPR001305">
    <property type="entry name" value="HSP_DnaJ_Cys-rich_dom"/>
</dbReference>
<dbReference type="InterPro" id="IPR036410">
    <property type="entry name" value="HSP_DnaJ_Cys-rich_dom_sf"/>
</dbReference>
<dbReference type="InterPro" id="IPR036869">
    <property type="entry name" value="J_dom_sf"/>
</dbReference>
<dbReference type="NCBIfam" id="TIGR02349">
    <property type="entry name" value="DnaJ_bact"/>
    <property type="match status" value="1"/>
</dbReference>
<dbReference type="NCBIfam" id="NF008035">
    <property type="entry name" value="PRK10767.1"/>
    <property type="match status" value="1"/>
</dbReference>
<dbReference type="NCBIfam" id="NF010877">
    <property type="entry name" value="PRK14284.1"/>
    <property type="match status" value="1"/>
</dbReference>
<dbReference type="PANTHER" id="PTHR43096:SF48">
    <property type="entry name" value="CHAPERONE PROTEIN DNAJ"/>
    <property type="match status" value="1"/>
</dbReference>
<dbReference type="PANTHER" id="PTHR43096">
    <property type="entry name" value="DNAJ HOMOLOG 1, MITOCHONDRIAL-RELATED"/>
    <property type="match status" value="1"/>
</dbReference>
<dbReference type="Pfam" id="PF00226">
    <property type="entry name" value="DnaJ"/>
    <property type="match status" value="1"/>
</dbReference>
<dbReference type="Pfam" id="PF01556">
    <property type="entry name" value="DnaJ_C"/>
    <property type="match status" value="1"/>
</dbReference>
<dbReference type="Pfam" id="PF00684">
    <property type="entry name" value="DnaJ_CXXCXGXG"/>
    <property type="match status" value="1"/>
</dbReference>
<dbReference type="PRINTS" id="PR00625">
    <property type="entry name" value="JDOMAIN"/>
</dbReference>
<dbReference type="SMART" id="SM00271">
    <property type="entry name" value="DnaJ"/>
    <property type="match status" value="1"/>
</dbReference>
<dbReference type="SUPFAM" id="SSF46565">
    <property type="entry name" value="Chaperone J-domain"/>
    <property type="match status" value="1"/>
</dbReference>
<dbReference type="SUPFAM" id="SSF57938">
    <property type="entry name" value="DnaJ/Hsp40 cysteine-rich domain"/>
    <property type="match status" value="1"/>
</dbReference>
<dbReference type="SUPFAM" id="SSF49493">
    <property type="entry name" value="HSP40/DnaJ peptide-binding domain"/>
    <property type="match status" value="2"/>
</dbReference>
<dbReference type="PROSITE" id="PS00636">
    <property type="entry name" value="DNAJ_1"/>
    <property type="match status" value="1"/>
</dbReference>
<dbReference type="PROSITE" id="PS50076">
    <property type="entry name" value="DNAJ_2"/>
    <property type="match status" value="1"/>
</dbReference>
<dbReference type="PROSITE" id="PS51188">
    <property type="entry name" value="ZF_CR"/>
    <property type="match status" value="1"/>
</dbReference>
<name>DNAJ_CHLFF</name>
<organism>
    <name type="scientific">Chlamydia felis (strain Fe/C-56)</name>
    <name type="common">Chlamydophila felis</name>
    <dbReference type="NCBI Taxonomy" id="264202"/>
    <lineage>
        <taxon>Bacteria</taxon>
        <taxon>Pseudomonadati</taxon>
        <taxon>Chlamydiota</taxon>
        <taxon>Chlamydiia</taxon>
        <taxon>Chlamydiales</taxon>
        <taxon>Chlamydiaceae</taxon>
        <taxon>Chlamydia/Chlamydophila group</taxon>
        <taxon>Chlamydia</taxon>
    </lineage>
</organism>
<keyword id="KW-0143">Chaperone</keyword>
<keyword id="KW-0963">Cytoplasm</keyword>
<keyword id="KW-0235">DNA replication</keyword>
<keyword id="KW-0479">Metal-binding</keyword>
<keyword id="KW-0677">Repeat</keyword>
<keyword id="KW-0346">Stress response</keyword>
<keyword id="KW-0862">Zinc</keyword>
<keyword id="KW-0863">Zinc-finger</keyword>
<reference key="1">
    <citation type="journal article" date="2006" name="DNA Res.">
        <title>Genome sequence of the cat pathogen, Chlamydophila felis.</title>
        <authorList>
            <person name="Azuma Y."/>
            <person name="Hirakawa H."/>
            <person name="Yamashita A."/>
            <person name="Cai Y."/>
            <person name="Rahman M.A."/>
            <person name="Suzuki H."/>
            <person name="Mitaku S."/>
            <person name="Toh H."/>
            <person name="Goto S."/>
            <person name="Murakami T."/>
            <person name="Sugi K."/>
            <person name="Hayashi H."/>
            <person name="Fukushi H."/>
            <person name="Hattori M."/>
            <person name="Kuhara S."/>
            <person name="Shirai M."/>
        </authorList>
    </citation>
    <scope>NUCLEOTIDE SEQUENCE [LARGE SCALE GENOMIC DNA]</scope>
    <source>
        <strain>Fe/C-56</strain>
    </source>
</reference>
<accession>Q253T6</accession>
<proteinExistence type="inferred from homology"/>
<sequence length="391" mass="42175">MDYYDVLGVSKTASPEEIKKAYRKLAVKYHPDKNPGDAEAEKRFKEVSEAYEVLSDAQKRESYDRYGKDGPFAGAGGFGGAGMGNMEDALRTFMGAFGGEFGGGGSFFEGLFGGLGEAFGMRGDPAGARQGASKKVHITLTFEEAARGVEKELLVSGYKTCTTCSGSGAANERGIKCCERCKGSGQIVQSRGFFSMASTCPECGGEGRIITDPCSNCRGQGRVKDKRNVHVQIPAGVDSGMRLKMEGYGDAGQNGAPSGDLYVFIDVEPHPVFERRGDDLILELPIGFVDAALGMKKEIPTLLKEGTCRLTVPEGIQSGTILKVKNQGFPNVHGRGRGDLLVRVSVETPQNLSEEQKELLRKFSSTEKAENFPKKRGFLDKIKGFFSDFTV</sequence>